<evidence type="ECO:0000255" key="1"/>
<evidence type="ECO:0000255" key="2">
    <source>
        <dbReference type="PROSITE-ProRule" id="PRU00521"/>
    </source>
</evidence>
<evidence type="ECO:0000305" key="3"/>
<name>OLF3_APILI</name>
<reference key="1">
    <citation type="journal article" date="1994" name="C. R. Acad. Sci. III, Sci. Vie">
        <title>Honeybees have putative olfactory receptor proteins similar to those of vertebrates.</title>
        <authorList>
            <person name="Danty E."/>
            <person name="Cornuet J.-M."/>
            <person name="Masson C."/>
        </authorList>
    </citation>
    <scope>NUCLEOTIDE SEQUENCE [MRNA]</scope>
    <source>
        <tissue>Antenna</tissue>
    </source>
</reference>
<comment type="function">
    <text evidence="3">Odorant receptor.</text>
</comment>
<comment type="subcellular location">
    <subcellularLocation>
        <location evidence="3">Cell membrane</location>
        <topology evidence="3">Multi-pass membrane protein</topology>
    </subcellularLocation>
</comment>
<comment type="similarity">
    <text evidence="2">Belongs to the G-protein coupled receptor 1 family.</text>
</comment>
<sequence>RYLAICNPLLYSVAMSQRLCIQLVVGPYVIGLMNTMTHTTNAFCLPFCGPNVINPFFCDMSPLLSLVCADTRLNKLAVFIVAGAVGVFSVLTILISYIYILMAILRMSADGRCRTFSTCSSHPTAAFISYGTLFFIYVQPSATFSLDLNKVVSVFYTAVIPMFSPFIC</sequence>
<organism>
    <name type="scientific">Apis mellifera ligustica</name>
    <name type="common">Common honeybee</name>
    <name type="synonym">Italian honeybee</name>
    <dbReference type="NCBI Taxonomy" id="7469"/>
    <lineage>
        <taxon>Eukaryota</taxon>
        <taxon>Metazoa</taxon>
        <taxon>Ecdysozoa</taxon>
        <taxon>Arthropoda</taxon>
        <taxon>Hexapoda</taxon>
        <taxon>Insecta</taxon>
        <taxon>Pterygota</taxon>
        <taxon>Neoptera</taxon>
        <taxon>Endopterygota</taxon>
        <taxon>Hymenoptera</taxon>
        <taxon>Apocrita</taxon>
        <taxon>Aculeata</taxon>
        <taxon>Apoidea</taxon>
        <taxon>Anthophila</taxon>
        <taxon>Apidae</taxon>
        <taxon>Apis</taxon>
    </lineage>
</organism>
<keyword id="KW-1003">Cell membrane</keyword>
<keyword id="KW-0297">G-protein coupled receptor</keyword>
<keyword id="KW-0472">Membrane</keyword>
<keyword id="KW-0552">Olfaction</keyword>
<keyword id="KW-0675">Receptor</keyword>
<keyword id="KW-0716">Sensory transduction</keyword>
<keyword id="KW-0807">Transducer</keyword>
<keyword id="KW-0812">Transmembrane</keyword>
<keyword id="KW-1133">Transmembrane helix</keyword>
<feature type="chain" id="PRO_0000150890" description="Olfactory receptor-like protein HbT3">
    <location>
        <begin position="1" status="less than"/>
        <end position="168" status="greater than"/>
    </location>
</feature>
<feature type="topological domain" description="Cytoplasmic" evidence="1">
    <location>
        <begin position="1" status="less than"/>
        <end position="18"/>
    </location>
</feature>
<feature type="transmembrane region" description="Helical; Name=4" evidence="1">
    <location>
        <begin position="19"/>
        <end position="39"/>
    </location>
</feature>
<feature type="topological domain" description="Extracellular" evidence="1">
    <location>
        <begin position="40"/>
        <end position="46"/>
    </location>
</feature>
<feature type="transmembrane region" description="Helical; Name=5" evidence="1">
    <location>
        <begin position="47"/>
        <end position="67"/>
    </location>
</feature>
<feature type="topological domain" description="Cytoplasmic" evidence="1">
    <location>
        <begin position="68"/>
        <end position="75"/>
    </location>
</feature>
<feature type="transmembrane region" description="Helical; Name=6" evidence="1">
    <location>
        <begin position="76"/>
        <end position="96"/>
    </location>
</feature>
<feature type="topological domain" description="Extracellular" evidence="1">
    <location>
        <begin position="97"/>
        <end position="125"/>
    </location>
</feature>
<feature type="transmembrane region" description="Helical; Name=7" evidence="1">
    <location>
        <begin position="126"/>
        <end position="146"/>
    </location>
</feature>
<feature type="topological domain" description="Cytoplasmic" evidence="1">
    <location>
        <begin position="147"/>
        <end position="168" status="greater than"/>
    </location>
</feature>
<feature type="non-terminal residue">
    <location>
        <position position="1"/>
    </location>
</feature>
<feature type="non-terminal residue">
    <location>
        <position position="168"/>
    </location>
</feature>
<proteinExistence type="evidence at transcript level"/>
<accession>Q26418</accession>
<protein>
    <recommendedName>
        <fullName>Olfactory receptor-like protein HbT3</fullName>
    </recommendedName>
</protein>
<dbReference type="EMBL" id="S76956">
    <property type="protein sequence ID" value="AAB33931.1"/>
    <property type="molecule type" value="mRNA"/>
</dbReference>
<dbReference type="SMR" id="Q26418"/>
<dbReference type="GO" id="GO:0005886">
    <property type="term" value="C:plasma membrane"/>
    <property type="evidence" value="ECO:0007669"/>
    <property type="project" value="UniProtKB-SubCell"/>
</dbReference>
<dbReference type="GO" id="GO:0004930">
    <property type="term" value="F:G protein-coupled receptor activity"/>
    <property type="evidence" value="ECO:0007669"/>
    <property type="project" value="UniProtKB-KW"/>
</dbReference>
<dbReference type="GO" id="GO:0004984">
    <property type="term" value="F:olfactory receptor activity"/>
    <property type="evidence" value="ECO:0007669"/>
    <property type="project" value="InterPro"/>
</dbReference>
<dbReference type="Gene3D" id="1.20.1070.10">
    <property type="entry name" value="Rhodopsin 7-helix transmembrane proteins"/>
    <property type="match status" value="1"/>
</dbReference>
<dbReference type="InterPro" id="IPR017452">
    <property type="entry name" value="GPCR_Rhodpsn_7TM"/>
</dbReference>
<dbReference type="InterPro" id="IPR000725">
    <property type="entry name" value="Olfact_rcpt"/>
</dbReference>
<dbReference type="PANTHER" id="PTHR48018">
    <property type="entry name" value="OLFACTORY RECEPTOR"/>
    <property type="match status" value="1"/>
</dbReference>
<dbReference type="Pfam" id="PF13853">
    <property type="entry name" value="7tm_4"/>
    <property type="match status" value="1"/>
</dbReference>
<dbReference type="PRINTS" id="PR00245">
    <property type="entry name" value="OLFACTORYR"/>
</dbReference>
<dbReference type="SUPFAM" id="SSF81321">
    <property type="entry name" value="Family A G protein-coupled receptor-like"/>
    <property type="match status" value="1"/>
</dbReference>
<dbReference type="PROSITE" id="PS50262">
    <property type="entry name" value="G_PROTEIN_RECEP_F1_2"/>
    <property type="match status" value="1"/>
</dbReference>